<dbReference type="EMBL" id="X67671">
    <property type="protein sequence ID" value="CAA47903.1"/>
    <property type="molecule type" value="Genomic_DNA"/>
</dbReference>
<dbReference type="EMBL" id="D13044">
    <property type="protein sequence ID" value="BAA02376.1"/>
    <property type="molecule type" value="Genomic_DNA"/>
</dbReference>
<dbReference type="EMBL" id="L22567">
    <property type="protein sequence ID" value="AAA32775.1"/>
    <property type="molecule type" value="mRNA"/>
</dbReference>
<dbReference type="EMBL" id="L22568">
    <property type="protein sequence ID" value="AAA32776.1"/>
    <property type="molecule type" value="Genomic_DNA"/>
</dbReference>
<dbReference type="EMBL" id="AB019226">
    <property type="protein sequence ID" value="BAB10528.1"/>
    <property type="molecule type" value="Genomic_DNA"/>
</dbReference>
<dbReference type="EMBL" id="CP002688">
    <property type="protein sequence ID" value="AED96199.1"/>
    <property type="molecule type" value="Genomic_DNA"/>
</dbReference>
<dbReference type="EMBL" id="AY054465">
    <property type="protein sequence ID" value="AAK96657.1"/>
    <property type="molecule type" value="mRNA"/>
</dbReference>
<dbReference type="EMBL" id="AK221520">
    <property type="protein sequence ID" value="BAD94805.1"/>
    <property type="molecule type" value="mRNA"/>
</dbReference>
<dbReference type="EMBL" id="X57600">
    <property type="protein sequence ID" value="CAA40826.1"/>
    <property type="molecule type" value="mRNA"/>
</dbReference>
<dbReference type="PIR" id="S30154">
    <property type="entry name" value="S30154"/>
</dbReference>
<dbReference type="RefSeq" id="NP_200044.1">
    <property type="nucleotide sequence ID" value="NM_124610.3"/>
</dbReference>
<dbReference type="SMR" id="Q06738"/>
<dbReference type="BioGRID" id="20552">
    <property type="interactions" value="2"/>
</dbReference>
<dbReference type="FunCoup" id="Q06738">
    <property type="interactions" value="141"/>
</dbReference>
<dbReference type="STRING" id="3702.Q06738"/>
<dbReference type="iPTMnet" id="Q06738"/>
<dbReference type="MetOSite" id="Q06738"/>
<dbReference type="PaxDb" id="3702-AT5G52310.1"/>
<dbReference type="ProMEX" id="Q06738"/>
<dbReference type="ProteomicsDB" id="225928"/>
<dbReference type="EnsemblPlants" id="AT5G52310.1">
    <property type="protein sequence ID" value="AT5G52310.1"/>
    <property type="gene ID" value="AT5G52310"/>
</dbReference>
<dbReference type="GeneID" id="835307"/>
<dbReference type="Gramene" id="AT5G52310.1">
    <property type="protein sequence ID" value="AT5G52310.1"/>
    <property type="gene ID" value="AT5G52310"/>
</dbReference>
<dbReference type="KEGG" id="ath:AT5G52310"/>
<dbReference type="Araport" id="AT5G52310"/>
<dbReference type="TAIR" id="AT5G52310">
    <property type="gene designation" value="LTI78"/>
</dbReference>
<dbReference type="eggNOG" id="ENOG502QU29">
    <property type="taxonomic scope" value="Eukaryota"/>
</dbReference>
<dbReference type="HOGENOM" id="CLU_024021_0_0_1"/>
<dbReference type="InParanoid" id="Q06738"/>
<dbReference type="OMA" id="FPMRSHT"/>
<dbReference type="PhylomeDB" id="Q06738"/>
<dbReference type="PRO" id="PR:Q06738"/>
<dbReference type="Proteomes" id="UP000006548">
    <property type="component" value="Chromosome 5"/>
</dbReference>
<dbReference type="ExpressionAtlas" id="Q06738">
    <property type="expression patterns" value="baseline and differential"/>
</dbReference>
<dbReference type="GO" id="GO:0005737">
    <property type="term" value="C:cytoplasm"/>
    <property type="evidence" value="ECO:0000314"/>
    <property type="project" value="UniProtKB"/>
</dbReference>
<dbReference type="GO" id="GO:0005829">
    <property type="term" value="C:cytosol"/>
    <property type="evidence" value="ECO:0007005"/>
    <property type="project" value="TAIR"/>
</dbReference>
<dbReference type="GO" id="GO:0009536">
    <property type="term" value="C:plastid"/>
    <property type="evidence" value="ECO:0007005"/>
    <property type="project" value="TAIR"/>
</dbReference>
<dbReference type="GO" id="GO:0007623">
    <property type="term" value="P:circadian rhythm"/>
    <property type="evidence" value="ECO:0000270"/>
    <property type="project" value="UniProtKB"/>
</dbReference>
<dbReference type="GO" id="GO:0042538">
    <property type="term" value="P:hyperosmotic salinity response"/>
    <property type="evidence" value="ECO:0000270"/>
    <property type="project" value="TAIR"/>
</dbReference>
<dbReference type="GO" id="GO:0010150">
    <property type="term" value="P:leaf senescence"/>
    <property type="evidence" value="ECO:0000315"/>
    <property type="project" value="TAIR"/>
</dbReference>
<dbReference type="GO" id="GO:2000280">
    <property type="term" value="P:regulation of root development"/>
    <property type="evidence" value="ECO:0000314"/>
    <property type="project" value="UniProtKB"/>
</dbReference>
<dbReference type="GO" id="GO:0009737">
    <property type="term" value="P:response to abscisic acid"/>
    <property type="evidence" value="ECO:0000270"/>
    <property type="project" value="UniProtKB"/>
</dbReference>
<dbReference type="GO" id="GO:0009409">
    <property type="term" value="P:response to cold"/>
    <property type="evidence" value="ECO:0000270"/>
    <property type="project" value="UniProtKB"/>
</dbReference>
<dbReference type="GO" id="GO:0010555">
    <property type="term" value="P:response to mannitol"/>
    <property type="evidence" value="ECO:0000270"/>
    <property type="project" value="UniProtKB"/>
</dbReference>
<dbReference type="GO" id="GO:0006970">
    <property type="term" value="P:response to osmotic stress"/>
    <property type="evidence" value="ECO:0000316"/>
    <property type="project" value="TAIR"/>
</dbReference>
<dbReference type="GO" id="GO:0000302">
    <property type="term" value="P:response to reactive oxygen species"/>
    <property type="evidence" value="ECO:0000270"/>
    <property type="project" value="UniProtKB"/>
</dbReference>
<dbReference type="GO" id="GO:1902074">
    <property type="term" value="P:response to salt"/>
    <property type="evidence" value="ECO:0000270"/>
    <property type="project" value="UniProtKB"/>
</dbReference>
<dbReference type="GO" id="GO:0009651">
    <property type="term" value="P:response to salt stress"/>
    <property type="evidence" value="ECO:0000270"/>
    <property type="project" value="UniProtKB"/>
</dbReference>
<dbReference type="GO" id="GO:0009609">
    <property type="term" value="P:response to symbiotic bacterium"/>
    <property type="evidence" value="ECO:0000270"/>
    <property type="project" value="UniProtKB"/>
</dbReference>
<dbReference type="GO" id="GO:0009414">
    <property type="term" value="P:response to water deprivation"/>
    <property type="evidence" value="ECO:0000270"/>
    <property type="project" value="UniProtKB"/>
</dbReference>
<dbReference type="GO" id="GO:0009611">
    <property type="term" value="P:response to wounding"/>
    <property type="evidence" value="ECO:0000270"/>
    <property type="project" value="UniProtKB"/>
</dbReference>
<dbReference type="InterPro" id="IPR057059">
    <property type="entry name" value="LTI65/LTI78_PGEED"/>
</dbReference>
<dbReference type="InterPro" id="IPR056605">
    <property type="entry name" value="LTI65_LTI78_N"/>
</dbReference>
<dbReference type="InterPro" id="IPR057058">
    <property type="entry name" value="LTI65_LTI78_NYQTKV"/>
</dbReference>
<dbReference type="InterPro" id="IPR037491">
    <property type="entry name" value="LTI78/LTI65"/>
</dbReference>
<dbReference type="PANTHER" id="PTHR33836">
    <property type="entry name" value="LOW-TEMPERATURE-INDUCED 65 KDA PROTEIN-RELATED"/>
    <property type="match status" value="1"/>
</dbReference>
<dbReference type="PANTHER" id="PTHR33836:SF1">
    <property type="entry name" value="LOW-TEMPERATURE-INDUCED 65 KDA PROTEIN-RELATED"/>
    <property type="match status" value="1"/>
</dbReference>
<dbReference type="Pfam" id="PF23403">
    <property type="entry name" value="LTI65_LTI78_N"/>
    <property type="match status" value="1"/>
</dbReference>
<dbReference type="Pfam" id="PF23402">
    <property type="entry name" value="LTI65_LTI78_NYQTKV"/>
    <property type="match status" value="1"/>
</dbReference>
<dbReference type="Pfam" id="PF23399">
    <property type="entry name" value="LTI65_PGEED"/>
    <property type="match status" value="1"/>
</dbReference>
<gene>
    <name evidence="28" type="primary">RD29A</name>
    <name evidence="27" type="synonym">COR78</name>
    <name evidence="25" type="synonym">LTI140</name>
    <name evidence="29" type="synonym">LTI78</name>
    <name evidence="33" type="ordered locus">At5g52310</name>
    <name evidence="34" type="ORF">K24M7.4</name>
</gene>
<sequence length="710" mass="77856">MDQTEEPPLNTHQQHPEEVEHHENGATKMFRKVKARAKKFKNSLTKHGQSNEHEQDHDLVEEDDDDDELEPEVIDAPGVTGKPRETNVPASEEIIPPGTKVFPVVSSDYTKPTESVPVQEASYGHDAPAHSVRTTFTSDKEEKRDVPIHHPLSELSDREESRETHHESLNTPVSLLSGTEDVTSTFAPSGDDEYLDGQRKVNVETPITLEEESAVSDYLSGVSNYQSKVTDPTKEETGGVPEIAESFGNMEVTDESPDQKPGQFERDLSTRSKEFKEFDQDFDSVLGKDSPAKFPGESGVVFPVGFGDESGAELEKDFPTRSHDFDMKTETGMDTNSPSRSHEFDLKTESGNDKNSPMGFGSESGAELEKEFDQKNDSGRNEYSPESDGGLGAPLGGNFPVRSHELDLKNESDIDKDVPTGFDGEPDFLAKGRPGYGEASEEDKFPARSDDVEVETELGRDPKTETLDQFSPELSHPKERDEFKESRDDFEETRDEKTEEPKQSTYTEKFASMLGYSGEIPVGDQTQVAGTVDEKLTPVNEKDQETESAVTTKLPISGGGSGVEEQRGEDKSVSGRDYVAEKLTTEEEDKAFSDMVAEKLQIGGEEEKKETTTKEVEKISTEKAASEEGEAVEEEVKGGGGMVGRIKGWFGGGATDEVKPESPHSVEEAPKSSGWFGGGATEEVKPKSPHSVEESPQSLGSTVVPVQKEL</sequence>
<proteinExistence type="evidence at protein level"/>
<feature type="chain" id="PRO_0000084511" description="Low-temperature-induced 78 kDa protein">
    <location>
        <begin position="1"/>
        <end position="710"/>
    </location>
</feature>
<feature type="repeat" description="1-1">
    <location>
        <begin position="303"/>
        <end position="316"/>
    </location>
</feature>
<feature type="repeat" description="2-1">
    <location>
        <begin position="317"/>
        <end position="331"/>
    </location>
</feature>
<feature type="repeat" description="2-2">
    <location>
        <begin position="336"/>
        <end position="350"/>
    </location>
</feature>
<feature type="repeat" description="1-2">
    <location>
        <begin position="357"/>
        <end position="370"/>
    </location>
</feature>
<feature type="repeat" description="2-3">
    <location>
        <begin position="398"/>
        <end position="412"/>
    </location>
</feature>
<feature type="repeat" description="3-1">
    <location>
        <begin position="510"/>
        <end position="514"/>
    </location>
</feature>
<feature type="repeat" description="3-2">
    <location>
        <begin position="532"/>
        <end position="536"/>
    </location>
</feature>
<feature type="repeat" description="3-3">
    <location>
        <begin position="550"/>
        <end position="554"/>
    </location>
</feature>
<feature type="repeat" description="3-4">
    <location>
        <begin position="579"/>
        <end position="583"/>
    </location>
</feature>
<feature type="repeat" description="3-5">
    <location>
        <begin position="596"/>
        <end position="600"/>
    </location>
</feature>
<feature type="repeat" description="4-1">
    <location>
        <begin position="648"/>
        <end position="670"/>
    </location>
</feature>
<feature type="repeat" description="4-2">
    <location>
        <begin position="674"/>
        <end position="696"/>
    </location>
</feature>
<feature type="region of interest" description="Disordered" evidence="1">
    <location>
        <begin position="1"/>
        <end position="198"/>
    </location>
</feature>
<feature type="region of interest" description="Disordered" evidence="1">
    <location>
        <begin position="225"/>
        <end position="269"/>
    </location>
</feature>
<feature type="region of interest" description="2 X 14 AA repeats of P-[MV]-G-F-G-[DS]-E-S-G-A-E-L-E-K">
    <location>
        <begin position="303"/>
        <end position="370"/>
    </location>
</feature>
<feature type="region of interest" description="Disordered" evidence="1">
    <location>
        <begin position="305"/>
        <end position="507"/>
    </location>
</feature>
<feature type="region of interest" description="3 X 15 AA repeats of [DN]-[FS]-P-[STV]-R-S-H-[DE]-[FL]-D-[LM]-K-[NT]-E-[ST]">
    <location>
        <begin position="317"/>
        <end position="412"/>
    </location>
</feature>
<feature type="region of interest" description="5 X 5 AA repeats of [FV]-[ADT]-[EST]-[KM]-L">
    <location>
        <begin position="510"/>
        <end position="600"/>
    </location>
</feature>
<feature type="region of interest" description="Disordered" evidence="1">
    <location>
        <begin position="537"/>
        <end position="577"/>
    </location>
</feature>
<feature type="region of interest" description="Disordered" evidence="1">
    <location>
        <begin position="601"/>
        <end position="710"/>
    </location>
</feature>
<feature type="region of interest" description="2 X 23 AA repeats">
    <location>
        <begin position="648"/>
        <end position="696"/>
    </location>
</feature>
<feature type="compositionally biased region" description="Basic and acidic residues" evidence="1">
    <location>
        <begin position="14"/>
        <end position="25"/>
    </location>
</feature>
<feature type="compositionally biased region" description="Basic residues" evidence="1">
    <location>
        <begin position="29"/>
        <end position="41"/>
    </location>
</feature>
<feature type="compositionally biased region" description="Basic and acidic residues" evidence="1">
    <location>
        <begin position="49"/>
        <end position="58"/>
    </location>
</feature>
<feature type="compositionally biased region" description="Acidic residues" evidence="1">
    <location>
        <begin position="59"/>
        <end position="73"/>
    </location>
</feature>
<feature type="compositionally biased region" description="Basic and acidic residues" evidence="1">
    <location>
        <begin position="138"/>
        <end position="168"/>
    </location>
</feature>
<feature type="compositionally biased region" description="Polar residues" evidence="1">
    <location>
        <begin position="169"/>
        <end position="187"/>
    </location>
</feature>
<feature type="compositionally biased region" description="Basic and acidic residues" evidence="1">
    <location>
        <begin position="313"/>
        <end position="331"/>
    </location>
</feature>
<feature type="compositionally biased region" description="Basic and acidic residues" evidence="1">
    <location>
        <begin position="340"/>
        <end position="352"/>
    </location>
</feature>
<feature type="compositionally biased region" description="Basic and acidic residues" evidence="1">
    <location>
        <begin position="367"/>
        <end position="380"/>
    </location>
</feature>
<feature type="compositionally biased region" description="Basic and acidic residues" evidence="1">
    <location>
        <begin position="402"/>
        <end position="418"/>
    </location>
</feature>
<feature type="compositionally biased region" description="Basic and acidic residues" evidence="1">
    <location>
        <begin position="442"/>
        <end position="466"/>
    </location>
</feature>
<feature type="compositionally biased region" description="Basic and acidic residues" evidence="1">
    <location>
        <begin position="475"/>
        <end position="487"/>
    </location>
</feature>
<feature type="compositionally biased region" description="Basic and acidic residues" evidence="1">
    <location>
        <begin position="564"/>
        <end position="577"/>
    </location>
</feature>
<feature type="compositionally biased region" description="Basic and acidic residues" evidence="1">
    <location>
        <begin position="605"/>
        <end position="626"/>
    </location>
</feature>
<feature type="compositionally biased region" description="Gly residues" evidence="1">
    <location>
        <begin position="638"/>
        <end position="654"/>
    </location>
</feature>
<feature type="compositionally biased region" description="Basic and acidic residues" evidence="1">
    <location>
        <begin position="656"/>
        <end position="670"/>
    </location>
</feature>
<feature type="compositionally biased region" description="Basic and acidic residues" evidence="1">
    <location>
        <begin position="682"/>
        <end position="693"/>
    </location>
</feature>
<feature type="modified residue" description="Phosphoserine" evidence="35">
    <location>
        <position position="626"/>
    </location>
</feature>
<feature type="sequence conflict" description="In Ref. 2; BAA02376." evidence="30" ref="2">
    <original>S</original>
    <variation>P</variation>
    <location>
        <position position="216"/>
    </location>
</feature>
<feature type="sequence conflict" description="In Ref. 2; BAA02376." evidence="30" ref="2">
    <original>E</original>
    <variation>V</variation>
    <location>
        <position position="491"/>
    </location>
</feature>
<feature type="sequence conflict" description="In Ref. 8; CAA40826." evidence="30" ref="8">
    <original>L</original>
    <variation>H</variation>
    <location>
        <position position="514"/>
    </location>
</feature>
<feature type="sequence conflict" description="In Ref. 3; AAA32776." evidence="30" ref="3">
    <original>K</original>
    <variation>R</variation>
    <location>
        <position position="535"/>
    </location>
</feature>
<protein>
    <recommendedName>
        <fullName evidence="29">Low-temperature-induced 78 kDa protein</fullName>
    </recommendedName>
    <alternativeName>
        <fullName evidence="28">Desiccation-responsive protein 29A</fullName>
    </alternativeName>
</protein>
<keyword id="KW-0963">Cytoplasm</keyword>
<keyword id="KW-0597">Phosphoprotein</keyword>
<keyword id="KW-1185">Reference proteome</keyword>
<keyword id="KW-0677">Repeat</keyword>
<keyword id="KW-0346">Stress response</keyword>
<comment type="function">
    <text evidence="10 26">Involved in responses to abiotic stresses (PubMed:21374086). Regulates probably root elongation in cold conditions (PubMed:19470100).</text>
</comment>
<comment type="subcellular location">
    <subcellularLocation>
        <location evidence="10">Cytoplasm</location>
    </subcellularLocation>
</comment>
<comment type="tissue specificity">
    <text evidence="7 21">Accumulates rapidly in leaves, stems, roots, flower petals, filaments, and sepals during cold-acclimation.</text>
</comment>
<comment type="induction">
    <text evidence="2 3 4 5 7 8 9 10 12 13 14 15 16 17 19 20 21 22 23 24">Levels follow a circadian cycle with higher levels during the day, in a calcium ion-dependent manner (PubMed:17227550). Triggered by water stress, osmotic stress (e.g. salt and mannitol), diacylglycerol pyrophosphate (DGPP) and abscisic acid (ABA) (PubMed:12694590, PubMed:16463099, PubMed:16766676, PubMed:1830821, PubMed:21374086, PubMed:8148648, PubMed:8448363, PubMed:9418048). Pretreatment with lanthanum, a calcium-channel blocker, prevents mannitol-mediated induction (PubMed:9418048). Induced reversibly by low temperature; by both acute (2-24 hours at 4 degrees Celsius) and chronic (5-6 weeks at 10 degrees Celsius) cold treatments (PubMed:12694590, PubMed:17227550, PubMed:1830821, PubMed:19470100, PubMed:21374086, PubMed:8148648, PubMed:8290624, PubMed:8448363). Levels are correlated with the rate of root elongation in the cold (PubMed:19470100). Induced by the plant growth promoting rhizobacteria (PGPRs) Enterobacter sp. EJ01 (PubMed:24598995). Triggered by WRKY8 during salt stress via direct promoter regulation in a pathway that involves PP2CG1 (PubMed:21374086, PubMed:22627139, PubMed:23451802). Induction by salt is also ethylene-dependent, with the intervention of EIN3 that activates ESE1, the transcription regulator of the pathway (PubMed:21832142). The salt-mediated accumulation involves reactive oxygen species (ROS), ROS-dependent induction being repressed by the NADPH oxidase inhibitor diphenylene iodonium (DPI) (PubMed:21677096). Stimulated reversibly via histone modifications (e.g. enrichment of H3K9ac and H3K4me3) by wounding and water deprivation (PubMed:18779215, PubMed:22505693, PubMed:22983672). Inactivated via histone modifications after rehydration (e.g. removal of H3K9ac and reduction of H3K4me3) (PubMed:22505693). At 22 degrees Celsius, induced synergistically by osmotic stress and ABA. In cold conditions, however, impaired induction by osmotic stress but induced synergistically by cold and ABA (PubMed:9880362).</text>
</comment>
<comment type="disruption phenotype">
    <text evidence="10">Enhanced root growth, photosynthesis and water use efficiency (WUE) under salt stress.</text>
</comment>
<comment type="biotechnology">
    <text evidence="6 11 18">The cold-inducible promoter of RD29A can be used to improve chill-resistance of crops by triggering the expression of given genes in low temperature conditions (e.g. potato low temperature sweetening).</text>
</comment>
<comment type="similarity">
    <text evidence="30">Belongs to the LTI78/LTI65 family.</text>
</comment>
<comment type="caution">
    <text evidence="31 32">An article reported induction by MKK1, MKK2 and MKK3 in response to drought and salt stresses; however, this paper was later retracted.</text>
</comment>
<reference key="1">
    <citation type="journal article" date="1993" name="Plant Mol. Biol.">
        <title>Differential expression of two related, low-temperature-induced genes in Arabidopsis thaliana (L.) Heynh.</title>
        <authorList>
            <person name="Nordin K."/>
            <person name="Vahala T."/>
            <person name="Palva E.T."/>
        </authorList>
    </citation>
    <scope>NUCLEOTIDE SEQUENCE [GENOMIC DNA]</scope>
    <scope>INDUCTION BY WATER STRESS; ABSCISIC ACID AND LOW TEMPERATURE</scope>
    <source>
        <strain>cv. Columbia</strain>
        <tissue>Leaf</tissue>
    </source>
</reference>
<reference key="2">
    <citation type="journal article" date="1993" name="Plant Physiol.">
        <title>Arabidopsis DNA encoding two desiccation-responsive rd29 genes.</title>
        <authorList>
            <person name="Yamaguchi-Shinozaki K."/>
            <person name="Shinozaki K."/>
        </authorList>
    </citation>
    <scope>NUCLEOTIDE SEQUENCE [GENOMIC DNA]</scope>
    <source>
        <strain>cv. Columbia</strain>
    </source>
</reference>
<reference key="3">
    <citation type="journal article" date="1993" name="Plant Physiol.">
        <title>Regulation of Arabidopsis thaliana L. (Heyn) cor78 in response to low temperature.</title>
        <authorList>
            <person name="Horvath D.P."/>
            <person name="McLarney B.K."/>
            <person name="Thomashow M.F."/>
        </authorList>
    </citation>
    <scope>NUCLEOTIDE SEQUENCE [GENOMIC DNA / MRNA]</scope>
    <scope>INDUCTION BY COLD</scope>
    <scope>TISSUE SPECIFICITY</scope>
    <source>
        <strain>cv. Landsberg erecta</strain>
        <strain>cv. RLD</strain>
    </source>
</reference>
<reference key="4">
    <citation type="journal article" date="2000" name="DNA Res.">
        <title>Structural analysis of Arabidopsis thaliana chromosome 5. X. Sequence features of the regions of 3,076,755 bp covered by sixty P1 and TAC clones.</title>
        <authorList>
            <person name="Sato S."/>
            <person name="Nakamura Y."/>
            <person name="Kaneko T."/>
            <person name="Katoh T."/>
            <person name="Asamizu E."/>
            <person name="Kotani H."/>
            <person name="Tabata S."/>
        </authorList>
    </citation>
    <scope>NUCLEOTIDE SEQUENCE [LARGE SCALE GENOMIC DNA]</scope>
    <source>
        <strain>cv. Columbia</strain>
    </source>
</reference>
<reference key="5">
    <citation type="journal article" date="2017" name="Plant J.">
        <title>Araport11: a complete reannotation of the Arabidopsis thaliana reference genome.</title>
        <authorList>
            <person name="Cheng C.Y."/>
            <person name="Krishnakumar V."/>
            <person name="Chan A.P."/>
            <person name="Thibaud-Nissen F."/>
            <person name="Schobel S."/>
            <person name="Town C.D."/>
        </authorList>
    </citation>
    <scope>GENOME REANNOTATION</scope>
    <source>
        <strain>cv. Columbia</strain>
    </source>
</reference>
<reference key="6">
    <citation type="journal article" date="2003" name="Science">
        <title>Empirical analysis of transcriptional activity in the Arabidopsis genome.</title>
        <authorList>
            <person name="Yamada K."/>
            <person name="Lim J."/>
            <person name="Dale J.M."/>
            <person name="Chen H."/>
            <person name="Shinn P."/>
            <person name="Palm C.J."/>
            <person name="Southwick A.M."/>
            <person name="Wu H.C."/>
            <person name="Kim C.J."/>
            <person name="Nguyen M."/>
            <person name="Pham P.K."/>
            <person name="Cheuk R.F."/>
            <person name="Karlin-Newmann G."/>
            <person name="Liu S.X."/>
            <person name="Lam B."/>
            <person name="Sakano H."/>
            <person name="Wu T."/>
            <person name="Yu G."/>
            <person name="Miranda M."/>
            <person name="Quach H.L."/>
            <person name="Tripp M."/>
            <person name="Chang C.H."/>
            <person name="Lee J.M."/>
            <person name="Toriumi M.J."/>
            <person name="Chan M.M."/>
            <person name="Tang C.C."/>
            <person name="Onodera C.S."/>
            <person name="Deng J.M."/>
            <person name="Akiyama K."/>
            <person name="Ansari Y."/>
            <person name="Arakawa T."/>
            <person name="Banh J."/>
            <person name="Banno F."/>
            <person name="Bowser L."/>
            <person name="Brooks S.Y."/>
            <person name="Carninci P."/>
            <person name="Chao Q."/>
            <person name="Choy N."/>
            <person name="Enju A."/>
            <person name="Goldsmith A.D."/>
            <person name="Gurjal M."/>
            <person name="Hansen N.F."/>
            <person name="Hayashizaki Y."/>
            <person name="Johnson-Hopson C."/>
            <person name="Hsuan V.W."/>
            <person name="Iida K."/>
            <person name="Karnes M."/>
            <person name="Khan S."/>
            <person name="Koesema E."/>
            <person name="Ishida J."/>
            <person name="Jiang P.X."/>
            <person name="Jones T."/>
            <person name="Kawai J."/>
            <person name="Kamiya A."/>
            <person name="Meyers C."/>
            <person name="Nakajima M."/>
            <person name="Narusaka M."/>
            <person name="Seki M."/>
            <person name="Sakurai T."/>
            <person name="Satou M."/>
            <person name="Tamse R."/>
            <person name="Vaysberg M."/>
            <person name="Wallender E.K."/>
            <person name="Wong C."/>
            <person name="Yamamura Y."/>
            <person name="Yuan S."/>
            <person name="Shinozaki K."/>
            <person name="Davis R.W."/>
            <person name="Theologis A."/>
            <person name="Ecker J.R."/>
        </authorList>
    </citation>
    <scope>NUCLEOTIDE SEQUENCE [LARGE SCALE MRNA] OF 1-605</scope>
    <source>
        <strain>cv. Columbia</strain>
    </source>
</reference>
<reference key="7">
    <citation type="submission" date="2005-03" db="EMBL/GenBank/DDBJ databases">
        <title>Large-scale analysis of RIKEN Arabidopsis full-length (RAFL) cDNAs.</title>
        <authorList>
            <person name="Totoki Y."/>
            <person name="Seki M."/>
            <person name="Ishida J."/>
            <person name="Nakajima M."/>
            <person name="Enju A."/>
            <person name="Kamiya A."/>
            <person name="Narusaka M."/>
            <person name="Shin-i T."/>
            <person name="Nakagawa M."/>
            <person name="Sakamoto N."/>
            <person name="Oishi K."/>
            <person name="Kohara Y."/>
            <person name="Kobayashi M."/>
            <person name="Toyoda A."/>
            <person name="Sakaki Y."/>
            <person name="Sakurai T."/>
            <person name="Iida K."/>
            <person name="Akiyama K."/>
            <person name="Satou M."/>
            <person name="Toyoda T."/>
            <person name="Konagaya A."/>
            <person name="Carninci P."/>
            <person name="Kawai J."/>
            <person name="Hayashizaki Y."/>
            <person name="Shinozaki K."/>
        </authorList>
    </citation>
    <scope>NUCLEOTIDE SEQUENCE [LARGE SCALE MRNA] OF 1-233</scope>
    <source>
        <strain>cv. Columbia</strain>
    </source>
</reference>
<reference key="8">
    <citation type="journal article" date="1991" name="Plant Mol. Biol.">
        <title>Separate signal pathways regulate the expression of a low-temperature-induced gene in Arabidopsis thaliana (L.) Heynh.</title>
        <authorList>
            <person name="Nordin K."/>
            <person name="Heino P."/>
            <person name="Palva E.T."/>
        </authorList>
    </citation>
    <scope>NUCLEOTIDE SEQUENCE [MRNA] OF 357-710</scope>
    <scope>INDUCTION BY WATER STRESS; ABSCISIC ACID AND LOW TEMPERATURE</scope>
    <source>
        <strain>cv. Columbia</strain>
        <tissue>Leaf</tissue>
    </source>
</reference>
<reference key="9">
    <citation type="journal article" date="1994" name="Plant Cell">
        <title>A novel cis-acting element in an Arabidopsis gene is involved in responsiveness to drought, low-temperature, or high-salt stress.</title>
        <authorList>
            <person name="Yamaguchi-Shinozaki K."/>
            <person name="Shinozaki K."/>
        </authorList>
    </citation>
    <scope>INDUCTION BY DROUGHT; SALT; COLD AND ABSCISIC ACID</scope>
</reference>
<reference key="10">
    <citation type="journal article" date="1997" name="Plant J.">
        <title>Calcium signalling in Arabidopsis thaliana responding to drought and salinity.</title>
        <authorList>
            <person name="Knight H."/>
            <person name="Trewavas A.J."/>
            <person name="Knight M.R."/>
        </authorList>
    </citation>
    <scope>INDUCTION BY MANNITOL AND SALT</scope>
</reference>
<reference key="11">
    <citation type="journal article" date="1999" name="Plant Physiol.">
        <title>Interaction of osmotic stress, temperature, and abscisic acid in the regulation of gene expression in Arabidopsis.</title>
        <authorList>
            <person name="Xiong L."/>
            <person name="Ishitani M."/>
            <person name="Zhu J.K."/>
        </authorList>
    </citation>
    <scope>INDUCTION BY SALT; COLD AND ABSCISIC ACID</scope>
    <source>
        <strain>cv. C24</strain>
    </source>
</reference>
<reference key="12">
    <citation type="journal article" date="2003" name="Plant J.">
        <title>Interaction between two cis-acting elements, ABRE and DRE, in ABA-dependent expression of Arabidopsis rd29A gene in response to dehydration and high-salinity stresses.</title>
        <authorList>
            <person name="Narusaka Y."/>
            <person name="Nakashima K."/>
            <person name="Shinwari Z.K."/>
            <person name="Sakuma Y."/>
            <person name="Furihata T."/>
            <person name="Abe H."/>
            <person name="Narusaka M."/>
            <person name="Shinozaki K."/>
            <person name="Yamaguchi-Shinozaki K."/>
        </authorList>
    </citation>
    <scope>INDUCTION BY DROUGHT; SALT; ABSCISIC ACID AND COLD</scope>
    <source>
        <strain>cv. Columbia</strain>
    </source>
</reference>
<reference key="13">
    <citation type="journal article" date="2006" name="Plant Cell Environ.">
        <title>Activation of the NaCl- and drought-induced RD29A and RD29B promoters by constitutively active Arabidopsis MAPKK or MAPK proteins.</title>
        <authorList>
            <person name="Hua Z.-M."/>
            <person name="Yang X."/>
            <person name="Fromm M.E."/>
        </authorList>
    </citation>
    <scope>RETRACTED PAPER</scope>
</reference>
<reference key="14">
    <citation type="journal article" date="2006" name="Plant Cell Environ.">
        <authorList>
            <person name="Keith M."/>
        </authorList>
    </citation>
    <scope>RETRACTION NOTICE OF PUBMED:16913865</scope>
</reference>
<reference key="15">
    <citation type="journal article" date="2006" name="Plant J.">
        <title>Time of day modulates low-temperature Ca signals in Arabidopsis.</title>
        <authorList>
            <person name="Dodd A.N."/>
            <person name="Jakobsen M.K."/>
            <person name="Baker A.J."/>
            <person name="Telzerow A."/>
            <person name="Hou S.-W."/>
            <person name="Laplaze L."/>
            <person name="Barrot L."/>
            <person name="Poethig R.S."/>
            <person name="Haseloff J."/>
            <person name="Webb A.A.R."/>
        </authorList>
    </citation>
    <scope>CIRCADIAN CYCLE</scope>
    <scope>INDUCTION BY COLD</scope>
    <source>
        <strain>cv. Columbia</strain>
    </source>
</reference>
<reference key="16">
    <citation type="journal article" date="2006" name="Plant Mol. Biol.">
        <title>Transcriptional regulation of ABI3- and ABA-responsive genes including RD29B and RD29A in seeds, germinating embryos, and seedlings of Arabidopsis.</title>
        <authorList>
            <person name="Nakashima K."/>
            <person name="Fujita Y."/>
            <person name="Katsura K."/>
            <person name="Maruyama K."/>
            <person name="Narusaka Y."/>
            <person name="Seki M."/>
            <person name="Shinozaki K."/>
            <person name="Yamaguchi-Shinozaki K."/>
        </authorList>
    </citation>
    <scope>INDUCTION BY SALT; DROUGHT AND ABSCISIC ACID</scope>
    <source>
        <strain>cv. Columbia</strain>
    </source>
</reference>
<reference key="17">
    <citation type="journal article" date="2006" name="Plant Physiol.">
        <title>Induction of abscisic acid-regulated gene expression by diacylglycerol pyrophosphate involves Ca2+ and anion currents in Arabidopsis suspension cells.</title>
        <authorList>
            <person name="Zalejski C."/>
            <person name="Paradis S."/>
            <person name="Maldiney R."/>
            <person name="Habricot Y."/>
            <person name="Miginiac E."/>
            <person name="Rona J.-P."/>
            <person name="Jeannette E."/>
        </authorList>
    </citation>
    <scope>INDUCTION BY ABSCISIC ACID AND DIACYLGLYCEROL PYROPHOSPHATE</scope>
</reference>
<reference key="18">
    <citation type="journal article" date="2007" name="Plant Cell Rep.">
        <title>Arabidopsis rd29A::DREB1A enhances freezing tolerance in transgenic potato.</title>
        <authorList>
            <person name="Behnam B."/>
            <person name="Kikuchi A."/>
            <person name="Celebi-Toprak F."/>
            <person name="Kasuga M."/>
            <person name="Yamaguchi-Shinozaki K."/>
            <person name="Watanabe K.N."/>
        </authorList>
    </citation>
    <scope>BIOTECHNOLOGY</scope>
</reference>
<reference key="19">
    <citation type="journal article" date="2008" name="Plant Cell Physiol.">
        <title>Alterations of lysine modifications on the histone H3 N-tail under drought stress conditions in Arabidopsis thaliana.</title>
        <authorList>
            <person name="Kim J.-M."/>
            <person name="To T.K."/>
            <person name="Ishida J."/>
            <person name="Morosawa T."/>
            <person name="Kawashima M."/>
            <person name="Matsui A."/>
            <person name="Toyoda T."/>
            <person name="Kimura H."/>
            <person name="Shinozaki K."/>
            <person name="Seki M."/>
        </authorList>
    </citation>
    <scope>INDUCTION BY WATER DEPRIVATION</scope>
</reference>
<reference key="20">
    <citation type="journal article" date="2009" name="Plant Biol.">
        <title>Differential expression of the CBF pathway and cell cycle-related genes in Arabidopsis accessions in response to chronic low-temperature exposure.</title>
        <authorList>
            <person name="Lee Y.P."/>
            <person name="Fleming A.J."/>
            <person name="Koerner C."/>
            <person name="Meins F. Jr."/>
        </authorList>
    </citation>
    <scope>FUNCTION</scope>
    <scope>INDUCTION BY COLD</scope>
    <source>
        <strain>cv. Columbia</strain>
    </source>
</reference>
<reference key="21">
    <citation type="journal article" date="2009" name="Plant Physiol.">
        <title>Large-scale Arabidopsis phosphoproteome profiling reveals novel chloroplast kinase substrates and phosphorylation networks.</title>
        <authorList>
            <person name="Reiland S."/>
            <person name="Messerli G."/>
            <person name="Baerenfaller K."/>
            <person name="Gerrits B."/>
            <person name="Endler A."/>
            <person name="Grossmann J."/>
            <person name="Gruissem W."/>
            <person name="Baginsky S."/>
        </authorList>
    </citation>
    <scope>PHOSPHORYLATION [LARGE SCALE ANALYSIS] AT SER-626</scope>
    <scope>IDENTIFICATION BY MASS SPECTROMETRY [LARGE SCALE ANALYSIS]</scope>
</reference>
<reference key="22">
    <citation type="journal article" date="2011" name="Planta">
        <title>Characterization of abiotic stress-responsive Arabidopsis thaliana RD29A and RD29B genes and evaluation of transgenes.</title>
        <authorList>
            <person name="Msanne J."/>
            <person name="Lin J."/>
            <person name="Stone J.M."/>
            <person name="Awada T."/>
        </authorList>
    </citation>
    <scope>FUNCTION</scope>
    <scope>DISRUPTION PHENOTYPE</scope>
    <scope>INDUCTION BY COLD; DROUGHT AND SALT</scope>
    <scope>SUBCELLULAR LOCATION</scope>
</reference>
<reference key="23">
    <citation type="journal article" date="2011" name="Plant Physiol.">
        <title>Inositol polyphosphate 5-phosphatase7 regulates the production of reactive oxygen species and salt tolerance in Arabidopsis.</title>
        <authorList>
            <person name="Kaye Y."/>
            <person name="Golani Y."/>
            <person name="Singer Y."/>
            <person name="Leshem Y."/>
            <person name="Cohen G."/>
            <person name="Ercetin M."/>
            <person name="Gillaspy G."/>
            <person name="Levine A."/>
        </authorList>
    </citation>
    <scope>INDUCTION BY SALT AND REACTIVE OXYGEN SPECIES</scope>
    <source>
        <strain>cv. Columbia</strain>
    </source>
</reference>
<reference key="24">
    <citation type="journal article" date="2011" name="Plant Physiol.">
        <title>An AP2 domain-containing gene, ESE1, targeted by the ethylene signaling component EIN3 is important for the salt response in Arabidopsis.</title>
        <authorList>
            <person name="Zhang L."/>
            <person name="Li Z."/>
            <person name="Quan R."/>
            <person name="Li G."/>
            <person name="Wang R."/>
            <person name="Huang R."/>
        </authorList>
    </citation>
    <scope>INDUCTION BY ESE1 AND SALT</scope>
</reference>
<reference key="25">
    <citation type="journal article" date="2011" name="PLoS ONE">
        <title>A three-component gene expression system and its application for inducible flavonoid overproduction in transgenic Arabidopsis thaliana.</title>
        <authorList>
            <person name="Feng Y."/>
            <person name="Cao C.-M."/>
            <person name="Vikram M."/>
            <person name="Park S."/>
            <person name="Kim H.J."/>
            <person name="Hong J.C."/>
            <person name="Cisneros-Zevallos L."/>
            <person name="Koiwa H."/>
        </authorList>
    </citation>
    <scope>BIOTECHNOLOGY</scope>
</reference>
<reference key="26">
    <citation type="journal article" date="2012" name="Biochem. Biophys. Res. Commun.">
        <title>AtPP2CG1, a protein phosphatase 2C, positively regulates salt tolerance of Arabidopsis in abscisic acid-dependent manner.</title>
        <authorList>
            <person name="Liu X."/>
            <person name="Zhu Y."/>
            <person name="Zhai H."/>
            <person name="Cai H."/>
            <person name="Ji W."/>
            <person name="Luo X."/>
            <person name="Li J."/>
            <person name="Bai X."/>
        </authorList>
    </citation>
    <scope>INDUCTION BY SALT STRESS</scope>
    <source>
        <strain>cv. Columbia</strain>
    </source>
</reference>
<reference key="27">
    <citation type="journal article" date="2012" name="Plant Cell Physiol.">
        <title>Transition of chromatin status during the process of recovery from drought stress in Arabidopsis thaliana.</title>
        <authorList>
            <person name="Kim J.M."/>
            <person name="To T.K."/>
            <person name="Ishida J."/>
            <person name="Matsui A."/>
            <person name="Kimura H."/>
            <person name="Seki M."/>
        </authorList>
    </citation>
    <scope>INDUCTION BY WATER DEPRIVATION</scope>
</reference>
<reference key="28">
    <citation type="journal article" date="2011" name="Physiol. Mol. Biol. Plants">
        <title>Alleviation of low temperature sweetening in potato by expressing Arabidopsis pyruvate decarboxylase gene and stress-inducible rd29A: A preliminary study.</title>
        <authorList>
            <person name="Pinhero R."/>
            <person name="Pazhekattu R."/>
            <person name="Marangoni A.G."/>
            <person name="Liu Q."/>
            <person name="Yada R.Y."/>
        </authorList>
    </citation>
    <scope>BIOTECHNOLOGY</scope>
</reference>
<reference key="29">
    <citation type="journal article" date="2013" name="Planta">
        <title>Activity of the Arabidopsis RD29A and RD29B promoter elements in soybean under water stress.</title>
        <authorList>
            <person name="Bihmidine S."/>
            <person name="Lin J."/>
            <person name="Stone J.M."/>
            <person name="Awada T."/>
            <person name="Specht J.E."/>
            <person name="Clemente T.E."/>
        </authorList>
    </citation>
    <scope>INDUCTION BY WOUNDING AND WATER DEPRIVATION</scope>
</reference>
<reference key="30">
    <citation type="journal article" date="2013" name="Plant J.">
        <title>Arabidopsis transcription factor WRKY8 functions antagonistically with its interacting partner VQ9 to modulate salinity stress tolerance.</title>
        <authorList>
            <person name="Hu Y."/>
            <person name="Chen L."/>
            <person name="Wang H."/>
            <person name="Zhang L."/>
            <person name="Wang F."/>
            <person name="Yu D."/>
        </authorList>
    </citation>
    <scope>INDUCTION BY WRKY8 DURING SALT STRESS</scope>
</reference>
<reference key="31">
    <citation type="journal article" date="2014" name="Mol. Cells">
        <title>Alleviation of salt stress by enterobacter sp. EJ01 in tomato and Arabidopsis is accompanied by up-regulation of conserved salinity responsive factors in plants.</title>
        <authorList>
            <person name="Kim K."/>
            <person name="Jang Y.-J."/>
            <person name="Lee S.-M."/>
            <person name="Oh B.-T."/>
            <person name="Chae J.-C."/>
            <person name="Lee K.-J."/>
        </authorList>
    </citation>
    <scope>INDUCTION BY ENTEROBACTER PLANT GROWTH PROMOTING RHIZOBACTERIA</scope>
</reference>
<accession>Q06738</accession>
<accession>Q04981</accession>
<accession>Q39060</accession>
<accession>Q56Y03</accession>
<accession>Q93Y41</accession>
<name>RD29A_ARATH</name>
<organism>
    <name type="scientific">Arabidopsis thaliana</name>
    <name type="common">Mouse-ear cress</name>
    <dbReference type="NCBI Taxonomy" id="3702"/>
    <lineage>
        <taxon>Eukaryota</taxon>
        <taxon>Viridiplantae</taxon>
        <taxon>Streptophyta</taxon>
        <taxon>Embryophyta</taxon>
        <taxon>Tracheophyta</taxon>
        <taxon>Spermatophyta</taxon>
        <taxon>Magnoliopsida</taxon>
        <taxon>eudicotyledons</taxon>
        <taxon>Gunneridae</taxon>
        <taxon>Pentapetalae</taxon>
        <taxon>rosids</taxon>
        <taxon>malvids</taxon>
        <taxon>Brassicales</taxon>
        <taxon>Brassicaceae</taxon>
        <taxon>Camelineae</taxon>
        <taxon>Arabidopsis</taxon>
    </lineage>
</organism>
<evidence type="ECO:0000256" key="1">
    <source>
        <dbReference type="SAM" id="MobiDB-lite"/>
    </source>
</evidence>
<evidence type="ECO:0000269" key="2">
    <source>
    </source>
</evidence>
<evidence type="ECO:0000269" key="3">
    <source>
    </source>
</evidence>
<evidence type="ECO:0000269" key="4">
    <source>
    </source>
</evidence>
<evidence type="ECO:0000269" key="5">
    <source>
    </source>
</evidence>
<evidence type="ECO:0000269" key="6">
    <source>
    </source>
</evidence>
<evidence type="ECO:0000269" key="7">
    <source>
    </source>
</evidence>
<evidence type="ECO:0000269" key="8">
    <source>
    </source>
</evidence>
<evidence type="ECO:0000269" key="9">
    <source>
    </source>
</evidence>
<evidence type="ECO:0000269" key="10">
    <source>
    </source>
</evidence>
<evidence type="ECO:0000269" key="11">
    <source>
    </source>
</evidence>
<evidence type="ECO:0000269" key="12">
    <source>
    </source>
</evidence>
<evidence type="ECO:0000269" key="13">
    <source>
    </source>
</evidence>
<evidence type="ECO:0000269" key="14">
    <source>
    </source>
</evidence>
<evidence type="ECO:0000269" key="15">
    <source>
    </source>
</evidence>
<evidence type="ECO:0000269" key="16">
    <source>
    </source>
</evidence>
<evidence type="ECO:0000269" key="17">
    <source>
    </source>
</evidence>
<evidence type="ECO:0000269" key="18">
    <source>
    </source>
</evidence>
<evidence type="ECO:0000269" key="19">
    <source>
    </source>
</evidence>
<evidence type="ECO:0000269" key="20">
    <source>
    </source>
</evidence>
<evidence type="ECO:0000269" key="21">
    <source>
    </source>
</evidence>
<evidence type="ECO:0000269" key="22">
    <source>
    </source>
</evidence>
<evidence type="ECO:0000269" key="23">
    <source>
    </source>
</evidence>
<evidence type="ECO:0000269" key="24">
    <source>
    </source>
</evidence>
<evidence type="ECO:0000303" key="25">
    <source>
    </source>
</evidence>
<evidence type="ECO:0000303" key="26">
    <source>
    </source>
</evidence>
<evidence type="ECO:0000303" key="27">
    <source>
    </source>
</evidence>
<evidence type="ECO:0000303" key="28">
    <source>
    </source>
</evidence>
<evidence type="ECO:0000303" key="29">
    <source>
    </source>
</evidence>
<evidence type="ECO:0000305" key="30"/>
<evidence type="ECO:0000305" key="31">
    <source>
    </source>
</evidence>
<evidence type="ECO:0000305" key="32">
    <source>
    </source>
</evidence>
<evidence type="ECO:0000312" key="33">
    <source>
        <dbReference type="Araport" id="AT5G52310"/>
    </source>
</evidence>
<evidence type="ECO:0000312" key="34">
    <source>
        <dbReference type="EMBL" id="BAB10528.1"/>
    </source>
</evidence>
<evidence type="ECO:0007744" key="35">
    <source>
    </source>
</evidence>